<name>LTAA_STAES</name>
<keyword id="KW-0050">Antiport</keyword>
<keyword id="KW-1003">Cell membrane</keyword>
<keyword id="KW-0445">Lipid transport</keyword>
<keyword id="KW-0472">Membrane</keyword>
<keyword id="KW-0812">Transmembrane</keyword>
<keyword id="KW-1133">Transmembrane helix</keyword>
<keyword id="KW-0813">Transport</keyword>
<keyword id="KW-0843">Virulence</keyword>
<comment type="function">
    <text evidence="1">Proton-coupled antiporter flippase that catalyzes the translocation, from the inner to the outer leaflet of the cell membrane, of the lipid-linked disaccharide (anchor-LLD) that anchors lipoteichoic acids (LTA) to the cell membrane.</text>
</comment>
<comment type="pathway">
    <text evidence="1">Cell wall biogenesis; lipoteichoic acid biosynthesis.</text>
</comment>
<comment type="subcellular location">
    <subcellularLocation>
        <location evidence="1">Cell membrane</location>
        <topology evidence="1">Multi-pass membrane protein</topology>
    </subcellularLocation>
</comment>
<comment type="similarity">
    <text evidence="3">Belongs to the major facilitator superfamily. LtaA family.</text>
</comment>
<proteinExistence type="inferred from homology"/>
<evidence type="ECO:0000250" key="1">
    <source>
        <dbReference type="UniProtKB" id="Q2FZP8"/>
    </source>
</evidence>
<evidence type="ECO:0000255" key="2"/>
<evidence type="ECO:0000305" key="3"/>
<feature type="chain" id="PRO_0000287161" description="Proton-coupled antiporter flippase LtaA">
    <location>
        <begin position="1"/>
        <end position="397"/>
    </location>
</feature>
<feature type="transmembrane region" description="Helical" evidence="2">
    <location>
        <begin position="15"/>
        <end position="34"/>
    </location>
</feature>
<feature type="transmembrane region" description="Helical" evidence="2">
    <location>
        <begin position="46"/>
        <end position="73"/>
    </location>
</feature>
<feature type="transmembrane region" description="Helical" evidence="2">
    <location>
        <begin position="80"/>
        <end position="99"/>
    </location>
</feature>
<feature type="transmembrane region" description="Helical" evidence="2">
    <location>
        <begin position="105"/>
        <end position="126"/>
    </location>
</feature>
<feature type="transmembrane region" description="Helical" evidence="2">
    <location>
        <begin position="138"/>
        <end position="159"/>
    </location>
</feature>
<feature type="transmembrane region" description="Helical" evidence="2">
    <location>
        <begin position="165"/>
        <end position="184"/>
    </location>
</feature>
<feature type="transmembrane region" description="Helical" evidence="2">
    <location>
        <begin position="211"/>
        <end position="231"/>
    </location>
</feature>
<feature type="transmembrane region" description="Helical" evidence="2">
    <location>
        <begin position="243"/>
        <end position="263"/>
    </location>
</feature>
<feature type="transmembrane region" description="Helical" evidence="2">
    <location>
        <begin position="275"/>
        <end position="294"/>
    </location>
</feature>
<feature type="transmembrane region" description="Helical" evidence="2">
    <location>
        <begin position="300"/>
        <end position="320"/>
    </location>
</feature>
<feature type="transmembrane region" description="Helical" evidence="2">
    <location>
        <begin position="340"/>
        <end position="363"/>
    </location>
</feature>
<feature type="transmembrane region" description="Helical" evidence="2">
    <location>
        <begin position="369"/>
        <end position="389"/>
    </location>
</feature>
<protein>
    <recommendedName>
        <fullName evidence="1">Proton-coupled antiporter flippase LtaA</fullName>
    </recommendedName>
    <alternativeName>
        <fullName evidence="1">Lipoteichoic acid protein A</fullName>
    </alternativeName>
</protein>
<accession>Q8CPR4</accession>
<organism>
    <name type="scientific">Staphylococcus epidermidis (strain ATCC 12228 / FDA PCI 1200)</name>
    <dbReference type="NCBI Taxonomy" id="176280"/>
    <lineage>
        <taxon>Bacteria</taxon>
        <taxon>Bacillati</taxon>
        <taxon>Bacillota</taxon>
        <taxon>Bacilli</taxon>
        <taxon>Bacillales</taxon>
        <taxon>Staphylococcaceae</taxon>
        <taxon>Staphylococcus</taxon>
    </lineage>
</organism>
<sequence>MQDSSSSNYSSNRNFVMMLVILFLMEFARGMYILSYINFLPTVTSIAIAITSFAFSIHFIADAATNFVIGFLLKKFGSKLVLTSGFLLAFISLFLVIWFPASPFIIIFSAIMLGIAVSPIWVIMLSSVDERNRGKQMGYVYFSWLLGLLVGMVIMNLLIKFHPTRFAFLMALVVLIAWVLYYFVNINLTNYNTKPVKAQLKQIVDVTQRHLILFPGILLQGAAIAALVPILPKYATQVVKVSTVEYTVAIIIGGIGCAFSMLFLSKIIDNNSKGFMYGVIFSGFILYTILIFGLSTITNIYIVWAIGLFIGLMYGILLPAWNTFMAGHINPNEQEETWGVFNSVQGFGSMIGPLVGGLITQFTNNLNNTFYFSAMIFLALAVFYGYYFIKTNRRVKP</sequence>
<reference key="1">
    <citation type="journal article" date="2003" name="Mol. Microbiol.">
        <title>Genome-based analysis of virulence genes in a non-biofilm-forming Staphylococcus epidermidis strain (ATCC 12228).</title>
        <authorList>
            <person name="Zhang Y.-Q."/>
            <person name="Ren S.-X."/>
            <person name="Li H.-L."/>
            <person name="Wang Y.-X."/>
            <person name="Fu G."/>
            <person name="Yang J."/>
            <person name="Qin Z.-Q."/>
            <person name="Miao Y.-G."/>
            <person name="Wang W.-Y."/>
            <person name="Chen R.-S."/>
            <person name="Shen Y."/>
            <person name="Chen Z."/>
            <person name="Yuan Z.-H."/>
            <person name="Zhao G.-P."/>
            <person name="Qu D."/>
            <person name="Danchin A."/>
            <person name="Wen Y.-M."/>
        </authorList>
    </citation>
    <scope>NUCLEOTIDE SEQUENCE [LARGE SCALE GENOMIC DNA]</scope>
    <source>
        <strain>ATCC 12228 / FDA PCI 1200</strain>
    </source>
</reference>
<dbReference type="EMBL" id="AE015929">
    <property type="protein sequence ID" value="AAO04313.1"/>
    <property type="molecule type" value="Genomic_DNA"/>
</dbReference>
<dbReference type="RefSeq" id="NP_764271.1">
    <property type="nucleotide sequence ID" value="NC_004461.1"/>
</dbReference>
<dbReference type="RefSeq" id="WP_002494345.1">
    <property type="nucleotide sequence ID" value="NZ_WBME01000019.1"/>
</dbReference>
<dbReference type="SMR" id="Q8CPR4"/>
<dbReference type="KEGG" id="sep:SE_0716"/>
<dbReference type="PATRIC" id="fig|176280.10.peg.690"/>
<dbReference type="eggNOG" id="COG2814">
    <property type="taxonomic scope" value="Bacteria"/>
</dbReference>
<dbReference type="HOGENOM" id="CLU_054518_0_0_9"/>
<dbReference type="OrthoDB" id="9815817at2"/>
<dbReference type="UniPathway" id="UPA00556"/>
<dbReference type="Proteomes" id="UP000001411">
    <property type="component" value="Chromosome"/>
</dbReference>
<dbReference type="GO" id="GO:0005886">
    <property type="term" value="C:plasma membrane"/>
    <property type="evidence" value="ECO:0007669"/>
    <property type="project" value="UniProtKB-SubCell"/>
</dbReference>
<dbReference type="GO" id="GO:0015297">
    <property type="term" value="F:antiporter activity"/>
    <property type="evidence" value="ECO:0007669"/>
    <property type="project" value="UniProtKB-KW"/>
</dbReference>
<dbReference type="GO" id="GO:0006869">
    <property type="term" value="P:lipid transport"/>
    <property type="evidence" value="ECO:0007669"/>
    <property type="project" value="UniProtKB-KW"/>
</dbReference>
<dbReference type="GO" id="GO:0070395">
    <property type="term" value="P:lipoteichoic acid biosynthetic process"/>
    <property type="evidence" value="ECO:0007669"/>
    <property type="project" value="UniProtKB-UniPathway"/>
</dbReference>
<dbReference type="CDD" id="cd17325">
    <property type="entry name" value="MFS_MdtG_SLC18_like"/>
    <property type="match status" value="1"/>
</dbReference>
<dbReference type="Gene3D" id="1.20.1250.20">
    <property type="entry name" value="MFS general substrate transporter like domains"/>
    <property type="match status" value="2"/>
</dbReference>
<dbReference type="InterPro" id="IPR050495">
    <property type="entry name" value="ATG22/LtaA_families"/>
</dbReference>
<dbReference type="InterPro" id="IPR011701">
    <property type="entry name" value="MFS"/>
</dbReference>
<dbReference type="InterPro" id="IPR020846">
    <property type="entry name" value="MFS_dom"/>
</dbReference>
<dbReference type="InterPro" id="IPR036259">
    <property type="entry name" value="MFS_trans_sf"/>
</dbReference>
<dbReference type="NCBIfam" id="NF047396">
    <property type="entry name" value="MFS_flip_LtaA"/>
    <property type="match status" value="1"/>
</dbReference>
<dbReference type="PANTHER" id="PTHR23519">
    <property type="entry name" value="AUTOPHAGY-RELATED PROTEIN 22"/>
    <property type="match status" value="1"/>
</dbReference>
<dbReference type="PANTHER" id="PTHR23519:SF1">
    <property type="entry name" value="AUTOPHAGY-RELATED PROTEIN 22"/>
    <property type="match status" value="1"/>
</dbReference>
<dbReference type="Pfam" id="PF07690">
    <property type="entry name" value="MFS_1"/>
    <property type="match status" value="1"/>
</dbReference>
<dbReference type="SUPFAM" id="SSF103473">
    <property type="entry name" value="MFS general substrate transporter"/>
    <property type="match status" value="1"/>
</dbReference>
<dbReference type="PROSITE" id="PS50850">
    <property type="entry name" value="MFS"/>
    <property type="match status" value="1"/>
</dbReference>
<gene>
    <name type="primary">ltaA</name>
    <name type="ordered locus">SE_0716</name>
</gene>